<name>MIAB_LEPBP</name>
<keyword id="KW-0004">4Fe-4S</keyword>
<keyword id="KW-0963">Cytoplasm</keyword>
<keyword id="KW-0408">Iron</keyword>
<keyword id="KW-0411">Iron-sulfur</keyword>
<keyword id="KW-0479">Metal-binding</keyword>
<keyword id="KW-1185">Reference proteome</keyword>
<keyword id="KW-0949">S-adenosyl-L-methionine</keyword>
<keyword id="KW-0808">Transferase</keyword>
<keyword id="KW-0819">tRNA processing</keyword>
<evidence type="ECO:0000255" key="1">
    <source>
        <dbReference type="HAMAP-Rule" id="MF_01864"/>
    </source>
</evidence>
<evidence type="ECO:0000255" key="2">
    <source>
        <dbReference type="PROSITE-ProRule" id="PRU01266"/>
    </source>
</evidence>
<protein>
    <recommendedName>
        <fullName evidence="1">tRNA-2-methylthio-N(6)-dimethylallyladenosine synthase</fullName>
        <ecNumber evidence="1">2.8.4.3</ecNumber>
    </recommendedName>
    <alternativeName>
        <fullName evidence="1">(Dimethylallyl)adenosine tRNA methylthiotransferase MiaB</fullName>
    </alternativeName>
    <alternativeName>
        <fullName evidence="1">tRNA-i(6)A37 methylthiotransferase</fullName>
    </alternativeName>
</protein>
<sequence>MNPTLTESQTLTPTIQLGKVYVETYGCQMNEYDSGIVKELFRKEHYETTNVVEESDIIFLNTCAVRENAHAKIYGRLQSLGYLKKKNPNLVIGVLGCMAQNLGEDLFHQELPLDLIVGPDNYRTLPELIQNIRNGEKDVQLTRLSRSETYDELEPKVVNGIQAFVTIMRGCNNFCTFCVVPYTRGRERSREPKSIIHEIKQLQEMGVKQVTLLGQNVNSYSYESYDFCALVESILKETTIERVRFTSPHPKDFPDHLISLMAKEDRFSSQIHMPLQAGSSKVLRDMKRSYTKEEYLDLVKKIQSVIPDIGITSDIIVGFPGETEEEFLETLEVVKKVKFDMSYMFKYSEREGTIAKRKFIDDVPEEVKSRRLIELVELQTKISLEKNTSKIGKIFSILIENTSKKSKQELCGRSHCGRMVVFPIPEGMSQDLSDWIGKTVNVLIEQATSATLKGKLIV</sequence>
<reference key="1">
    <citation type="journal article" date="2008" name="PLoS ONE">
        <title>Genome sequence of the saprophyte Leptospira biflexa provides insights into the evolution of Leptospira and the pathogenesis of leptospirosis.</title>
        <authorList>
            <person name="Picardeau M."/>
            <person name="Bulach D.M."/>
            <person name="Bouchier C."/>
            <person name="Zuerner R.L."/>
            <person name="Zidane N."/>
            <person name="Wilson P.J."/>
            <person name="Creno S."/>
            <person name="Kuczek E.S."/>
            <person name="Bommezzadri S."/>
            <person name="Davis J.C."/>
            <person name="McGrath A."/>
            <person name="Johnson M.J."/>
            <person name="Boursaux-Eude C."/>
            <person name="Seemann T."/>
            <person name="Rouy Z."/>
            <person name="Coppel R.L."/>
            <person name="Rood J.I."/>
            <person name="Lajus A."/>
            <person name="Davies J.K."/>
            <person name="Medigue C."/>
            <person name="Adler B."/>
        </authorList>
    </citation>
    <scope>NUCLEOTIDE SEQUENCE [LARGE SCALE GENOMIC DNA]</scope>
    <source>
        <strain>Patoc 1 / ATCC 23582 / Paris</strain>
    </source>
</reference>
<feature type="chain" id="PRO_0000374359" description="tRNA-2-methylthio-N(6)-dimethylallyladenosine synthase">
    <location>
        <begin position="1"/>
        <end position="458"/>
    </location>
</feature>
<feature type="domain" description="MTTase N-terminal" evidence="1">
    <location>
        <begin position="18"/>
        <end position="134"/>
    </location>
</feature>
<feature type="domain" description="Radical SAM core" evidence="2">
    <location>
        <begin position="157"/>
        <end position="385"/>
    </location>
</feature>
<feature type="domain" description="TRAM" evidence="1">
    <location>
        <begin position="388"/>
        <end position="458"/>
    </location>
</feature>
<feature type="binding site" evidence="1">
    <location>
        <position position="27"/>
    </location>
    <ligand>
        <name>[4Fe-4S] cluster</name>
        <dbReference type="ChEBI" id="CHEBI:49883"/>
        <label>1</label>
    </ligand>
</feature>
<feature type="binding site" evidence="1">
    <location>
        <position position="63"/>
    </location>
    <ligand>
        <name>[4Fe-4S] cluster</name>
        <dbReference type="ChEBI" id="CHEBI:49883"/>
        <label>1</label>
    </ligand>
</feature>
<feature type="binding site" evidence="1">
    <location>
        <position position="97"/>
    </location>
    <ligand>
        <name>[4Fe-4S] cluster</name>
        <dbReference type="ChEBI" id="CHEBI:49883"/>
        <label>1</label>
    </ligand>
</feature>
<feature type="binding site" evidence="1">
    <location>
        <position position="171"/>
    </location>
    <ligand>
        <name>[4Fe-4S] cluster</name>
        <dbReference type="ChEBI" id="CHEBI:49883"/>
        <label>2</label>
        <note>4Fe-4S-S-AdoMet</note>
    </ligand>
</feature>
<feature type="binding site" evidence="1">
    <location>
        <position position="175"/>
    </location>
    <ligand>
        <name>[4Fe-4S] cluster</name>
        <dbReference type="ChEBI" id="CHEBI:49883"/>
        <label>2</label>
        <note>4Fe-4S-S-AdoMet</note>
    </ligand>
</feature>
<feature type="binding site" evidence="1">
    <location>
        <position position="178"/>
    </location>
    <ligand>
        <name>[4Fe-4S] cluster</name>
        <dbReference type="ChEBI" id="CHEBI:49883"/>
        <label>2</label>
        <note>4Fe-4S-S-AdoMet</note>
    </ligand>
</feature>
<organism>
    <name type="scientific">Leptospira biflexa serovar Patoc (strain Patoc 1 / ATCC 23582 / Paris)</name>
    <dbReference type="NCBI Taxonomy" id="456481"/>
    <lineage>
        <taxon>Bacteria</taxon>
        <taxon>Pseudomonadati</taxon>
        <taxon>Spirochaetota</taxon>
        <taxon>Spirochaetia</taxon>
        <taxon>Leptospirales</taxon>
        <taxon>Leptospiraceae</taxon>
        <taxon>Leptospira</taxon>
    </lineage>
</organism>
<dbReference type="EC" id="2.8.4.3" evidence="1"/>
<dbReference type="EMBL" id="CP000786">
    <property type="protein sequence ID" value="ABZ97921.1"/>
    <property type="molecule type" value="Genomic_DNA"/>
</dbReference>
<dbReference type="RefSeq" id="WP_012388799.1">
    <property type="nucleotide sequence ID" value="NC_010602.1"/>
</dbReference>
<dbReference type="SMR" id="B0SS31"/>
<dbReference type="STRING" id="456481.LEPBI_I1815"/>
<dbReference type="KEGG" id="lbi:LEPBI_I1815"/>
<dbReference type="HOGENOM" id="CLU_018697_2_0_12"/>
<dbReference type="OrthoDB" id="9805215at2"/>
<dbReference type="BioCyc" id="LBIF456481:LEPBI_RS08970-MONOMER"/>
<dbReference type="Proteomes" id="UP000001847">
    <property type="component" value="Chromosome I"/>
</dbReference>
<dbReference type="GO" id="GO:0005829">
    <property type="term" value="C:cytosol"/>
    <property type="evidence" value="ECO:0007669"/>
    <property type="project" value="TreeGrafter"/>
</dbReference>
<dbReference type="GO" id="GO:0051539">
    <property type="term" value="F:4 iron, 4 sulfur cluster binding"/>
    <property type="evidence" value="ECO:0007669"/>
    <property type="project" value="UniProtKB-UniRule"/>
</dbReference>
<dbReference type="GO" id="GO:0046872">
    <property type="term" value="F:metal ion binding"/>
    <property type="evidence" value="ECO:0007669"/>
    <property type="project" value="UniProtKB-KW"/>
</dbReference>
<dbReference type="GO" id="GO:0035597">
    <property type="term" value="F:N6-isopentenyladenosine methylthiotransferase activity"/>
    <property type="evidence" value="ECO:0007669"/>
    <property type="project" value="TreeGrafter"/>
</dbReference>
<dbReference type="CDD" id="cd01335">
    <property type="entry name" value="Radical_SAM"/>
    <property type="match status" value="1"/>
</dbReference>
<dbReference type="FunFam" id="3.40.50.12160:FF:000003">
    <property type="entry name" value="CDK5 regulatory subunit-associated protein 1"/>
    <property type="match status" value="1"/>
</dbReference>
<dbReference type="FunFam" id="3.80.30.20:FF:000001">
    <property type="entry name" value="tRNA-2-methylthio-N(6)-dimethylallyladenosine synthase 2"/>
    <property type="match status" value="1"/>
</dbReference>
<dbReference type="Gene3D" id="3.40.50.12160">
    <property type="entry name" value="Methylthiotransferase, N-terminal domain"/>
    <property type="match status" value="1"/>
</dbReference>
<dbReference type="Gene3D" id="3.80.30.20">
    <property type="entry name" value="tm_1862 like domain"/>
    <property type="match status" value="1"/>
</dbReference>
<dbReference type="HAMAP" id="MF_01864">
    <property type="entry name" value="tRNA_metthiotr_MiaB"/>
    <property type="match status" value="1"/>
</dbReference>
<dbReference type="InterPro" id="IPR006638">
    <property type="entry name" value="Elp3/MiaA/NifB-like_rSAM"/>
</dbReference>
<dbReference type="InterPro" id="IPR005839">
    <property type="entry name" value="Methylthiotransferase"/>
</dbReference>
<dbReference type="InterPro" id="IPR020612">
    <property type="entry name" value="Methylthiotransferase_CS"/>
</dbReference>
<dbReference type="InterPro" id="IPR013848">
    <property type="entry name" value="Methylthiotransferase_N"/>
</dbReference>
<dbReference type="InterPro" id="IPR038135">
    <property type="entry name" value="Methylthiotransferase_N_sf"/>
</dbReference>
<dbReference type="InterPro" id="IPR006463">
    <property type="entry name" value="MiaB_methiolase"/>
</dbReference>
<dbReference type="InterPro" id="IPR007197">
    <property type="entry name" value="rSAM"/>
</dbReference>
<dbReference type="InterPro" id="IPR023404">
    <property type="entry name" value="rSAM_horseshoe"/>
</dbReference>
<dbReference type="InterPro" id="IPR002792">
    <property type="entry name" value="TRAM_dom"/>
</dbReference>
<dbReference type="NCBIfam" id="TIGR01574">
    <property type="entry name" value="miaB-methiolase"/>
    <property type="match status" value="1"/>
</dbReference>
<dbReference type="NCBIfam" id="TIGR00089">
    <property type="entry name" value="MiaB/RimO family radical SAM methylthiotransferase"/>
    <property type="match status" value="1"/>
</dbReference>
<dbReference type="PANTHER" id="PTHR43020">
    <property type="entry name" value="CDK5 REGULATORY SUBUNIT-ASSOCIATED PROTEIN 1"/>
    <property type="match status" value="1"/>
</dbReference>
<dbReference type="PANTHER" id="PTHR43020:SF2">
    <property type="entry name" value="MITOCHONDRIAL TRNA METHYLTHIOTRANSFERASE CDK5RAP1"/>
    <property type="match status" value="1"/>
</dbReference>
<dbReference type="Pfam" id="PF04055">
    <property type="entry name" value="Radical_SAM"/>
    <property type="match status" value="1"/>
</dbReference>
<dbReference type="Pfam" id="PF01938">
    <property type="entry name" value="TRAM"/>
    <property type="match status" value="1"/>
</dbReference>
<dbReference type="Pfam" id="PF00919">
    <property type="entry name" value="UPF0004"/>
    <property type="match status" value="1"/>
</dbReference>
<dbReference type="SFLD" id="SFLDF00273">
    <property type="entry name" value="(dimethylallyl)adenosine_tRNA"/>
    <property type="match status" value="1"/>
</dbReference>
<dbReference type="SFLD" id="SFLDG01082">
    <property type="entry name" value="B12-binding_domain_containing"/>
    <property type="match status" value="1"/>
</dbReference>
<dbReference type="SFLD" id="SFLDF00413">
    <property type="entry name" value="CDK5RAP1"/>
    <property type="match status" value="1"/>
</dbReference>
<dbReference type="SFLD" id="SFLDS00029">
    <property type="entry name" value="Radical_SAM"/>
    <property type="match status" value="1"/>
</dbReference>
<dbReference type="SMART" id="SM00729">
    <property type="entry name" value="Elp3"/>
    <property type="match status" value="1"/>
</dbReference>
<dbReference type="SUPFAM" id="SSF102114">
    <property type="entry name" value="Radical SAM enzymes"/>
    <property type="match status" value="1"/>
</dbReference>
<dbReference type="PROSITE" id="PS51449">
    <property type="entry name" value="MTTASE_N"/>
    <property type="match status" value="1"/>
</dbReference>
<dbReference type="PROSITE" id="PS01278">
    <property type="entry name" value="MTTASE_RADICAL"/>
    <property type="match status" value="1"/>
</dbReference>
<dbReference type="PROSITE" id="PS51918">
    <property type="entry name" value="RADICAL_SAM"/>
    <property type="match status" value="1"/>
</dbReference>
<dbReference type="PROSITE" id="PS50926">
    <property type="entry name" value="TRAM"/>
    <property type="match status" value="1"/>
</dbReference>
<proteinExistence type="inferred from homology"/>
<accession>B0SS31</accession>
<gene>
    <name evidence="1" type="primary">miaB</name>
    <name type="ordered locus">LEPBI_I1815</name>
</gene>
<comment type="function">
    <text evidence="1">Catalyzes the methylthiolation of N6-(dimethylallyl)adenosine (i(6)A), leading to the formation of 2-methylthio-N6-(dimethylallyl)adenosine (ms(2)i(6)A) at position 37 in tRNAs that read codons beginning with uridine.</text>
</comment>
<comment type="catalytic activity">
    <reaction evidence="1">
        <text>N(6)-dimethylallyladenosine(37) in tRNA + (sulfur carrier)-SH + AH2 + 2 S-adenosyl-L-methionine = 2-methylsulfanyl-N(6)-dimethylallyladenosine(37) in tRNA + (sulfur carrier)-H + 5'-deoxyadenosine + L-methionine + A + S-adenosyl-L-homocysteine + 2 H(+)</text>
        <dbReference type="Rhea" id="RHEA:37067"/>
        <dbReference type="Rhea" id="RHEA-COMP:10375"/>
        <dbReference type="Rhea" id="RHEA-COMP:10376"/>
        <dbReference type="Rhea" id="RHEA-COMP:14737"/>
        <dbReference type="Rhea" id="RHEA-COMP:14739"/>
        <dbReference type="ChEBI" id="CHEBI:13193"/>
        <dbReference type="ChEBI" id="CHEBI:15378"/>
        <dbReference type="ChEBI" id="CHEBI:17319"/>
        <dbReference type="ChEBI" id="CHEBI:17499"/>
        <dbReference type="ChEBI" id="CHEBI:29917"/>
        <dbReference type="ChEBI" id="CHEBI:57844"/>
        <dbReference type="ChEBI" id="CHEBI:57856"/>
        <dbReference type="ChEBI" id="CHEBI:59789"/>
        <dbReference type="ChEBI" id="CHEBI:64428"/>
        <dbReference type="ChEBI" id="CHEBI:74415"/>
        <dbReference type="ChEBI" id="CHEBI:74417"/>
        <dbReference type="EC" id="2.8.4.3"/>
    </reaction>
</comment>
<comment type="cofactor">
    <cofactor evidence="1">
        <name>[4Fe-4S] cluster</name>
        <dbReference type="ChEBI" id="CHEBI:49883"/>
    </cofactor>
    <text evidence="1">Binds 2 [4Fe-4S] clusters. One cluster is coordinated with 3 cysteines and an exchangeable S-adenosyl-L-methionine.</text>
</comment>
<comment type="subunit">
    <text evidence="1">Monomer.</text>
</comment>
<comment type="subcellular location">
    <subcellularLocation>
        <location evidence="1">Cytoplasm</location>
    </subcellularLocation>
</comment>
<comment type="similarity">
    <text evidence="1">Belongs to the methylthiotransferase family. MiaB subfamily.</text>
</comment>